<evidence type="ECO:0000250" key="1">
    <source>
        <dbReference type="UniProtKB" id="A0A0M3KKW3"/>
    </source>
</evidence>
<evidence type="ECO:0000250" key="2">
    <source>
        <dbReference type="UniProtKB" id="A2VBC4"/>
    </source>
</evidence>
<evidence type="ECO:0000250" key="3">
    <source>
        <dbReference type="UniProtKB" id="P0DMB4"/>
    </source>
</evidence>
<evidence type="ECO:0000250" key="4">
    <source>
        <dbReference type="UniProtKB" id="P0DMB7"/>
    </source>
</evidence>
<evidence type="ECO:0000255" key="5">
    <source>
        <dbReference type="PROSITE-ProRule" id="PRU10037"/>
    </source>
</evidence>
<evidence type="ECO:0000269" key="6">
    <source>
    </source>
</evidence>
<evidence type="ECO:0000303" key="7">
    <source>
    </source>
</evidence>
<evidence type="ECO:0000305" key="8"/>
<evidence type="ECO:0000305" key="9">
    <source>
    </source>
</evidence>
<organism>
    <name type="scientific">Dolichovespula maculata</name>
    <name type="common">Bald-faced hornet</name>
    <name type="synonym">Vespula maculata</name>
    <dbReference type="NCBI Taxonomy" id="7441"/>
    <lineage>
        <taxon>Eukaryota</taxon>
        <taxon>Metazoa</taxon>
        <taxon>Ecdysozoa</taxon>
        <taxon>Arthropoda</taxon>
        <taxon>Hexapoda</taxon>
        <taxon>Insecta</taxon>
        <taxon>Pterygota</taxon>
        <taxon>Neoptera</taxon>
        <taxon>Endopterygota</taxon>
        <taxon>Hymenoptera</taxon>
        <taxon>Apocrita</taxon>
        <taxon>Aculeata</taxon>
        <taxon>Vespoidea</taxon>
        <taxon>Vespidae</taxon>
        <taxon>Vespinae</taxon>
        <taxon>Dolichovespula</taxon>
    </lineage>
</organism>
<feature type="chain" id="PRO_0000090375" description="Phospholipase A1 2">
    <location>
        <begin position="1"/>
        <end position="303"/>
    </location>
</feature>
<feature type="active site" description="Nucleophile" evidence="1">
    <location>
        <position position="140"/>
    </location>
</feature>
<feature type="active site" description="Charge relay system" evidence="5">
    <location>
        <position position="168"/>
    </location>
</feature>
<feature type="active site" description="Charge relay system" evidence="5">
    <location>
        <position position="232"/>
    </location>
</feature>
<feature type="disulfide bond" evidence="1">
    <location>
        <begin position="6"/>
        <end position="90"/>
    </location>
</feature>
<feature type="disulfide bond" evidence="1">
    <location>
        <begin position="179"/>
        <end position="184"/>
    </location>
</feature>
<feature type="disulfide bond" evidence="1">
    <location>
        <begin position="247"/>
        <end position="271"/>
    </location>
</feature>
<feature type="disulfide bond" evidence="1">
    <location>
        <begin position="248"/>
        <end position="296"/>
    </location>
</feature>
<feature type="disulfide bond" evidence="1">
    <location>
        <begin position="264"/>
        <end position="269"/>
    </location>
</feature>
<feature type="sequence variant">
    <original>G</original>
    <variation>E</variation>
    <location>
        <position position="55"/>
    </location>
</feature>
<feature type="sequence variant">
    <original>F</original>
    <variation>Y</variation>
    <location>
        <position position="295"/>
    </location>
</feature>
<comment type="function">
    <text evidence="3 4">Catalyzes the hydrolysis of phosphatidylcholine with phospholipase A1 activity (By similarity). May act as an allergen and induce hemolytic activity (By similarity).</text>
</comment>
<comment type="catalytic activity">
    <reaction evidence="3">
        <text>a 1,2-diacyl-sn-glycero-3-phosphocholine + H2O = a 2-acyl-sn-glycero-3-phosphocholine + a fatty acid + H(+)</text>
        <dbReference type="Rhea" id="RHEA:18689"/>
        <dbReference type="ChEBI" id="CHEBI:15377"/>
        <dbReference type="ChEBI" id="CHEBI:15378"/>
        <dbReference type="ChEBI" id="CHEBI:28868"/>
        <dbReference type="ChEBI" id="CHEBI:57643"/>
        <dbReference type="ChEBI" id="CHEBI:57875"/>
        <dbReference type="EC" id="3.1.1.32"/>
    </reaction>
</comment>
<comment type="subcellular location">
    <subcellularLocation>
        <location evidence="6">Secreted</location>
    </subcellularLocation>
</comment>
<comment type="tissue specificity">
    <text evidence="9">Expressed by the venom gland.</text>
</comment>
<comment type="allergen">
    <text evidence="2">Causes an allergic reaction in human. Binds to IgE.</text>
</comment>
<comment type="similarity">
    <text evidence="8">Belongs to the AB hydrolase superfamily. Lipase family.</text>
</comment>
<keyword id="KW-0020">Allergen</keyword>
<keyword id="KW-0903">Direct protein sequencing</keyword>
<keyword id="KW-1015">Disulfide bond</keyword>
<keyword id="KW-0378">Hydrolase</keyword>
<keyword id="KW-0442">Lipid degradation</keyword>
<keyword id="KW-0443">Lipid metabolism</keyword>
<keyword id="KW-0964">Secreted</keyword>
<name>PA12_DOLMA</name>
<accession>P53357</accession>
<reference key="1">
    <citation type="journal article" date="1994" name="Int. Arch. Allergy Immunol.">
        <title>Allergens in hymenoptera venom. XXVI: the complete amino acid sequences of two vespid venom phospholipases.</title>
        <authorList>
            <person name="Hoffman D.R."/>
        </authorList>
    </citation>
    <scope>PROTEIN SEQUENCE</scope>
    <scope>SUBCELLULAR LOCATION</scope>
    <source>
        <tissue>Venom</tissue>
    </source>
</reference>
<proteinExistence type="evidence at protein level"/>
<protein>
    <recommendedName>
        <fullName>Phospholipase A1 2</fullName>
        <shortName>PLA1 2</shortName>
        <ecNumber evidence="3">3.1.1.32</ecNumber>
    </recommendedName>
    <alternativeName>
        <fullName evidence="7">Allergen Dol m 1</fullName>
    </alternativeName>
    <allergenName evidence="7">Dol m 1</allergenName>
</protein>
<dbReference type="EC" id="3.1.1.32" evidence="3"/>
<dbReference type="PIR" id="A44563">
    <property type="entry name" value="A44563"/>
</dbReference>
<dbReference type="SMR" id="P53357"/>
<dbReference type="Allergome" id="1668">
    <property type="allergen name" value="Dol m 1.02"/>
</dbReference>
<dbReference type="Allergome" id="328">
    <property type="allergen name" value="Dol m 1"/>
</dbReference>
<dbReference type="ESTHER" id="dolma-ppla12">
    <property type="family name" value="Insect_Phospholipase"/>
</dbReference>
<dbReference type="GO" id="GO:0005615">
    <property type="term" value="C:extracellular space"/>
    <property type="evidence" value="ECO:0007669"/>
    <property type="project" value="TreeGrafter"/>
</dbReference>
<dbReference type="GO" id="GO:0008970">
    <property type="term" value="F:phospholipase A1 activity"/>
    <property type="evidence" value="ECO:0007669"/>
    <property type="project" value="UniProtKB-EC"/>
</dbReference>
<dbReference type="GO" id="GO:0004623">
    <property type="term" value="F:phospholipase A2 activity"/>
    <property type="evidence" value="ECO:0007669"/>
    <property type="project" value="UniProtKB-EC"/>
</dbReference>
<dbReference type="GO" id="GO:0016042">
    <property type="term" value="P:lipid catabolic process"/>
    <property type="evidence" value="ECO:0007669"/>
    <property type="project" value="UniProtKB-KW"/>
</dbReference>
<dbReference type="CDD" id="cd00707">
    <property type="entry name" value="Pancreat_lipase_like"/>
    <property type="match status" value="1"/>
</dbReference>
<dbReference type="Gene3D" id="3.40.50.1820">
    <property type="entry name" value="alpha/beta hydrolase"/>
    <property type="match status" value="1"/>
</dbReference>
<dbReference type="InterPro" id="IPR029058">
    <property type="entry name" value="AB_hydrolase_fold"/>
</dbReference>
<dbReference type="InterPro" id="IPR002334">
    <property type="entry name" value="Allerg_PlipaseA1"/>
</dbReference>
<dbReference type="InterPro" id="IPR013818">
    <property type="entry name" value="Lipase"/>
</dbReference>
<dbReference type="InterPro" id="IPR033906">
    <property type="entry name" value="Lipase_N"/>
</dbReference>
<dbReference type="InterPro" id="IPR000734">
    <property type="entry name" value="TAG_lipase"/>
</dbReference>
<dbReference type="PANTHER" id="PTHR11610">
    <property type="entry name" value="LIPASE"/>
    <property type="match status" value="1"/>
</dbReference>
<dbReference type="Pfam" id="PF00151">
    <property type="entry name" value="Lipase"/>
    <property type="match status" value="1"/>
</dbReference>
<dbReference type="PRINTS" id="PR00825">
    <property type="entry name" value="DOLALLERGEN"/>
</dbReference>
<dbReference type="PRINTS" id="PR00821">
    <property type="entry name" value="TAGLIPASE"/>
</dbReference>
<dbReference type="SUPFAM" id="SSF53474">
    <property type="entry name" value="alpha/beta-Hydrolases"/>
    <property type="match status" value="1"/>
</dbReference>
<dbReference type="PROSITE" id="PS00120">
    <property type="entry name" value="LIPASE_SER"/>
    <property type="match status" value="1"/>
</dbReference>
<sequence>GILPECKLVPEEISFVLSTRENRDGVYLTLQKLKNGKMFKNSDLSSKKVPFLIHGFISSATNKNYADMTRALLDKDDIMVISIDWRDGACSNEFALLKFIGYPKAVENTRAVGKYIADFSKILIQKYKVLLENIRLIGHSLGAQIAGFAGKEFQRFKLGKYPEIIGLDPAGPSFKKKDCPERICETDAHYVQILHTSSNLGTERTLGTVDFYINDGSNQPGCTYIIGETCSHTRAVKYLTECIRRECCLIGVPQSKNPQPVSKCTRNECVCVGLNAKEYPKKGSFYVPVEAKAPFCNNNGKII</sequence>